<accession>P60744</accession>
<sequence>MAAKIRKGDKVIVLSGRDKGRTGEVFEVRPDAGKALVRGINVVKRHQKQTQTQEGGIISKEAPIDLSNIAIVGKDGKPTRVGFKILADGKKVRVAKRSGAEIDG</sequence>
<feature type="initiator methionine" description="Removed">
    <location>
        <position position="1"/>
    </location>
</feature>
<feature type="chain" id="PRO_0000130704" description="Large ribosomal subunit protein uL24">
    <location>
        <begin position="2"/>
        <end position="104"/>
    </location>
</feature>
<reference key="1">
    <citation type="journal article" date="2004" name="Nat. Biotechnol.">
        <title>Complete genome sequence of the metabolically versatile photosynthetic bacterium Rhodopseudomonas palustris.</title>
        <authorList>
            <person name="Larimer F.W."/>
            <person name="Chain P."/>
            <person name="Hauser L."/>
            <person name="Lamerdin J.E."/>
            <person name="Malfatti S."/>
            <person name="Do L."/>
            <person name="Land M.L."/>
            <person name="Pelletier D.A."/>
            <person name="Beatty J.T."/>
            <person name="Lang A.S."/>
            <person name="Tabita F.R."/>
            <person name="Gibson J.L."/>
            <person name="Hanson T.E."/>
            <person name="Bobst C."/>
            <person name="Torres y Torres J.L."/>
            <person name="Peres C."/>
            <person name="Harrison F.H."/>
            <person name="Gibson J."/>
            <person name="Harwood C.S."/>
        </authorList>
    </citation>
    <scope>NUCLEOTIDE SEQUENCE [LARGE SCALE GENOMIC DNA]</scope>
    <source>
        <strain>ATCC BAA-98 / CGA009</strain>
    </source>
</reference>
<reference key="2">
    <citation type="journal article" date="2004" name="J. Proteome Res.">
        <title>Characterization of the 70S ribosome from Rhodopseudomonas palustris using an integrated 'top-down' and 'bottom-up' mass spectrometric approach.</title>
        <authorList>
            <person name="Strader M.B."/>
            <person name="VerBerkmoes N.C."/>
            <person name="Tabb D.L."/>
            <person name="Connelly H.M."/>
            <person name="Barton J.W."/>
            <person name="Bruce B.D."/>
            <person name="Pelletier D.A."/>
            <person name="Davison B.H."/>
            <person name="Hettich R.L."/>
            <person name="Larimer F.W."/>
            <person name="Hurst G.B."/>
        </authorList>
    </citation>
    <scope>MASS SPECTROMETRY</scope>
    <source>
        <strain>ATCC BAA-98 / CGA009</strain>
    </source>
</reference>
<keyword id="KW-0488">Methylation</keyword>
<keyword id="KW-0687">Ribonucleoprotein</keyword>
<keyword id="KW-0689">Ribosomal protein</keyword>
<keyword id="KW-0694">RNA-binding</keyword>
<keyword id="KW-0699">rRNA-binding</keyword>
<evidence type="ECO:0000255" key="1">
    <source>
        <dbReference type="HAMAP-Rule" id="MF_01326"/>
    </source>
</evidence>
<evidence type="ECO:0000269" key="2">
    <source>
    </source>
</evidence>
<evidence type="ECO:0000305" key="3"/>
<dbReference type="EMBL" id="BX572603">
    <property type="protein sequence ID" value="CAE28680.1"/>
    <property type="molecule type" value="Genomic_DNA"/>
</dbReference>
<dbReference type="RefSeq" id="WP_011158784.1">
    <property type="nucleotide sequence ID" value="NZ_CP116810.1"/>
</dbReference>
<dbReference type="SMR" id="P60744"/>
<dbReference type="IntAct" id="P60744">
    <property type="interactions" value="1"/>
</dbReference>
<dbReference type="STRING" id="258594.RPA3239"/>
<dbReference type="GeneID" id="66894325"/>
<dbReference type="eggNOG" id="COG0198">
    <property type="taxonomic scope" value="Bacteria"/>
</dbReference>
<dbReference type="HOGENOM" id="CLU_093315_2_2_5"/>
<dbReference type="PhylomeDB" id="P60744"/>
<dbReference type="GO" id="GO:1990904">
    <property type="term" value="C:ribonucleoprotein complex"/>
    <property type="evidence" value="ECO:0007669"/>
    <property type="project" value="UniProtKB-KW"/>
</dbReference>
<dbReference type="GO" id="GO:0005840">
    <property type="term" value="C:ribosome"/>
    <property type="evidence" value="ECO:0007669"/>
    <property type="project" value="UniProtKB-KW"/>
</dbReference>
<dbReference type="GO" id="GO:0019843">
    <property type="term" value="F:rRNA binding"/>
    <property type="evidence" value="ECO:0007669"/>
    <property type="project" value="UniProtKB-UniRule"/>
</dbReference>
<dbReference type="GO" id="GO:0003735">
    <property type="term" value="F:structural constituent of ribosome"/>
    <property type="evidence" value="ECO:0007669"/>
    <property type="project" value="InterPro"/>
</dbReference>
<dbReference type="GO" id="GO:0006412">
    <property type="term" value="P:translation"/>
    <property type="evidence" value="ECO:0007669"/>
    <property type="project" value="UniProtKB-UniRule"/>
</dbReference>
<dbReference type="CDD" id="cd06089">
    <property type="entry name" value="KOW_RPL26"/>
    <property type="match status" value="1"/>
</dbReference>
<dbReference type="FunFam" id="2.30.30.30:FF:000051">
    <property type="entry name" value="50S ribosomal protein L24"/>
    <property type="match status" value="1"/>
</dbReference>
<dbReference type="Gene3D" id="2.30.30.30">
    <property type="match status" value="1"/>
</dbReference>
<dbReference type="HAMAP" id="MF_01326_B">
    <property type="entry name" value="Ribosomal_uL24_B"/>
    <property type="match status" value="1"/>
</dbReference>
<dbReference type="InterPro" id="IPR005824">
    <property type="entry name" value="KOW"/>
</dbReference>
<dbReference type="InterPro" id="IPR014722">
    <property type="entry name" value="Rib_uL2_dom2"/>
</dbReference>
<dbReference type="InterPro" id="IPR003256">
    <property type="entry name" value="Ribosomal_uL24"/>
</dbReference>
<dbReference type="InterPro" id="IPR005825">
    <property type="entry name" value="Ribosomal_uL24_CS"/>
</dbReference>
<dbReference type="InterPro" id="IPR041988">
    <property type="entry name" value="Ribosomal_uL24_KOW"/>
</dbReference>
<dbReference type="InterPro" id="IPR008991">
    <property type="entry name" value="Translation_prot_SH3-like_sf"/>
</dbReference>
<dbReference type="NCBIfam" id="TIGR01079">
    <property type="entry name" value="rplX_bact"/>
    <property type="match status" value="1"/>
</dbReference>
<dbReference type="PANTHER" id="PTHR12903">
    <property type="entry name" value="MITOCHONDRIAL RIBOSOMAL PROTEIN L24"/>
    <property type="match status" value="1"/>
</dbReference>
<dbReference type="Pfam" id="PF00467">
    <property type="entry name" value="KOW"/>
    <property type="match status" value="1"/>
</dbReference>
<dbReference type="Pfam" id="PF17136">
    <property type="entry name" value="ribosomal_L24"/>
    <property type="match status" value="1"/>
</dbReference>
<dbReference type="SMART" id="SM00739">
    <property type="entry name" value="KOW"/>
    <property type="match status" value="1"/>
</dbReference>
<dbReference type="SUPFAM" id="SSF50104">
    <property type="entry name" value="Translation proteins SH3-like domain"/>
    <property type="match status" value="1"/>
</dbReference>
<dbReference type="PROSITE" id="PS01108">
    <property type="entry name" value="RIBOSOMAL_L24"/>
    <property type="match status" value="1"/>
</dbReference>
<name>RL24_RHOPA</name>
<comment type="function">
    <text evidence="1">One of two assembly initiator proteins, it binds directly to the 5'-end of the 23S rRNA, where it nucleates assembly of the 50S subunit.</text>
</comment>
<comment type="function">
    <text evidence="1">One of the proteins that surrounds the polypeptide exit tunnel on the outside of the subunit.</text>
</comment>
<comment type="subunit">
    <text evidence="1">Part of the 50S ribosomal subunit.</text>
</comment>
<comment type="PTM">
    <text>A methylated and unmethylated form are thought to exist.</text>
</comment>
<comment type="mass spectrometry">
    <text>For unmethylated form.</text>
</comment>
<comment type="mass spectrometry">
    <text>For methylated form.</text>
</comment>
<comment type="similarity">
    <text evidence="1">Belongs to the universal ribosomal protein uL24 family.</text>
</comment>
<organism>
    <name type="scientific">Rhodopseudomonas palustris (strain ATCC BAA-98 / CGA009)</name>
    <dbReference type="NCBI Taxonomy" id="258594"/>
    <lineage>
        <taxon>Bacteria</taxon>
        <taxon>Pseudomonadati</taxon>
        <taxon>Pseudomonadota</taxon>
        <taxon>Alphaproteobacteria</taxon>
        <taxon>Hyphomicrobiales</taxon>
        <taxon>Nitrobacteraceae</taxon>
        <taxon>Rhodopseudomonas</taxon>
    </lineage>
</organism>
<gene>
    <name evidence="1" type="primary">rplX</name>
    <name type="ordered locus">RPA3239</name>
</gene>
<proteinExistence type="evidence at protein level"/>
<protein>
    <recommendedName>
        <fullName evidence="1">Large ribosomal subunit protein uL24</fullName>
    </recommendedName>
    <alternativeName>
        <fullName evidence="3">50S ribosomal protein L24</fullName>
    </alternativeName>
    <alternativeName>
        <fullName>RRP-L24</fullName>
    </alternativeName>
</protein>